<gene>
    <name evidence="1" type="primary">rbfA</name>
    <name type="ordered locus">Psyc_0070</name>
</gene>
<keyword id="KW-0963">Cytoplasm</keyword>
<keyword id="KW-1185">Reference proteome</keyword>
<keyword id="KW-0690">Ribosome biogenesis</keyword>
<sequence>MNQRLQRLADQIQRELAVLIRDAVNDPRLTGFVTISSVKVSPDLGYADVYVTIMEPELNDAMTMSNHEESIKVLNKAAGFLRTELSHSLKTRTTPRLRFHYDEVTARGNYMMDLISKAVIKTEENESDEQENEE</sequence>
<organism>
    <name type="scientific">Psychrobacter arcticus (strain DSM 17307 / VKM B-2377 / 273-4)</name>
    <dbReference type="NCBI Taxonomy" id="259536"/>
    <lineage>
        <taxon>Bacteria</taxon>
        <taxon>Pseudomonadati</taxon>
        <taxon>Pseudomonadota</taxon>
        <taxon>Gammaproteobacteria</taxon>
        <taxon>Moraxellales</taxon>
        <taxon>Moraxellaceae</taxon>
        <taxon>Psychrobacter</taxon>
    </lineage>
</organism>
<name>RBFA_PSYA2</name>
<protein>
    <recommendedName>
        <fullName evidence="1">Ribosome-binding factor A</fullName>
    </recommendedName>
</protein>
<proteinExistence type="inferred from homology"/>
<feature type="chain" id="PRO_0000321240" description="Ribosome-binding factor A">
    <location>
        <begin position="1"/>
        <end position="134"/>
    </location>
</feature>
<accession>Q4FVL4</accession>
<evidence type="ECO:0000255" key="1">
    <source>
        <dbReference type="HAMAP-Rule" id="MF_00003"/>
    </source>
</evidence>
<dbReference type="EMBL" id="CP000082">
    <property type="protein sequence ID" value="AAZ17944.1"/>
    <property type="molecule type" value="Genomic_DNA"/>
</dbReference>
<dbReference type="RefSeq" id="WP_011279383.1">
    <property type="nucleotide sequence ID" value="NC_007204.1"/>
</dbReference>
<dbReference type="SMR" id="Q4FVL4"/>
<dbReference type="STRING" id="259536.Psyc_0070"/>
<dbReference type="KEGG" id="par:Psyc_0070"/>
<dbReference type="eggNOG" id="COG0858">
    <property type="taxonomic scope" value="Bacteria"/>
</dbReference>
<dbReference type="HOGENOM" id="CLU_089475_5_0_6"/>
<dbReference type="OrthoDB" id="307788at2"/>
<dbReference type="Proteomes" id="UP000000546">
    <property type="component" value="Chromosome"/>
</dbReference>
<dbReference type="GO" id="GO:0005829">
    <property type="term" value="C:cytosol"/>
    <property type="evidence" value="ECO:0007669"/>
    <property type="project" value="TreeGrafter"/>
</dbReference>
<dbReference type="GO" id="GO:0043024">
    <property type="term" value="F:ribosomal small subunit binding"/>
    <property type="evidence" value="ECO:0007669"/>
    <property type="project" value="TreeGrafter"/>
</dbReference>
<dbReference type="GO" id="GO:0030490">
    <property type="term" value="P:maturation of SSU-rRNA"/>
    <property type="evidence" value="ECO:0007669"/>
    <property type="project" value="UniProtKB-UniRule"/>
</dbReference>
<dbReference type="Gene3D" id="3.30.300.20">
    <property type="match status" value="1"/>
</dbReference>
<dbReference type="HAMAP" id="MF_00003">
    <property type="entry name" value="RbfA"/>
    <property type="match status" value="1"/>
</dbReference>
<dbReference type="InterPro" id="IPR015946">
    <property type="entry name" value="KH_dom-like_a/b"/>
</dbReference>
<dbReference type="InterPro" id="IPR000238">
    <property type="entry name" value="RbfA"/>
</dbReference>
<dbReference type="InterPro" id="IPR023799">
    <property type="entry name" value="RbfA_dom_sf"/>
</dbReference>
<dbReference type="NCBIfam" id="NF010389">
    <property type="entry name" value="PRK13816.1"/>
    <property type="match status" value="1"/>
</dbReference>
<dbReference type="NCBIfam" id="TIGR00082">
    <property type="entry name" value="rbfA"/>
    <property type="match status" value="1"/>
</dbReference>
<dbReference type="PANTHER" id="PTHR33515">
    <property type="entry name" value="RIBOSOME-BINDING FACTOR A, CHLOROPLASTIC-RELATED"/>
    <property type="match status" value="1"/>
</dbReference>
<dbReference type="PANTHER" id="PTHR33515:SF1">
    <property type="entry name" value="RIBOSOME-BINDING FACTOR A, CHLOROPLASTIC-RELATED"/>
    <property type="match status" value="1"/>
</dbReference>
<dbReference type="Pfam" id="PF02033">
    <property type="entry name" value="RBFA"/>
    <property type="match status" value="1"/>
</dbReference>
<dbReference type="SUPFAM" id="SSF89919">
    <property type="entry name" value="Ribosome-binding factor A, RbfA"/>
    <property type="match status" value="1"/>
</dbReference>
<comment type="function">
    <text evidence="1">One of several proteins that assist in the late maturation steps of the functional core of the 30S ribosomal subunit. Associates with free 30S ribosomal subunits (but not with 30S subunits that are part of 70S ribosomes or polysomes). Required for efficient processing of 16S rRNA. May interact with the 5'-terminal helix region of 16S rRNA.</text>
</comment>
<comment type="subunit">
    <text evidence="1">Monomer. Binds 30S ribosomal subunits, but not 50S ribosomal subunits or 70S ribosomes.</text>
</comment>
<comment type="subcellular location">
    <subcellularLocation>
        <location evidence="1">Cytoplasm</location>
    </subcellularLocation>
</comment>
<comment type="similarity">
    <text evidence="1">Belongs to the RbfA family.</text>
</comment>
<reference key="1">
    <citation type="journal article" date="2010" name="Appl. Environ. Microbiol.">
        <title>The genome sequence of Psychrobacter arcticus 273-4, a psychroactive Siberian permafrost bacterium, reveals mechanisms for adaptation to low-temperature growth.</title>
        <authorList>
            <person name="Ayala-del-Rio H.L."/>
            <person name="Chain P.S."/>
            <person name="Grzymski J.J."/>
            <person name="Ponder M.A."/>
            <person name="Ivanova N."/>
            <person name="Bergholz P.W."/>
            <person name="Di Bartolo G."/>
            <person name="Hauser L."/>
            <person name="Land M."/>
            <person name="Bakermans C."/>
            <person name="Rodrigues D."/>
            <person name="Klappenbach J."/>
            <person name="Zarka D."/>
            <person name="Larimer F."/>
            <person name="Richardson P."/>
            <person name="Murray A."/>
            <person name="Thomashow M."/>
            <person name="Tiedje J.M."/>
        </authorList>
    </citation>
    <scope>NUCLEOTIDE SEQUENCE [LARGE SCALE GENOMIC DNA]</scope>
    <source>
        <strain>DSM 17307 / VKM B-2377 / 273-4</strain>
    </source>
</reference>